<sequence length="94" mass="10033">MLELNLQLFAHKKGGGSTSNGRDSQAKRLGAKASDGELVSGGSILFRQRGTHIHPGTNVGRGGDDTLFAKIEGTVKFEMKRGKKHVSVYPVVAK</sequence>
<reference key="1">
    <citation type="journal article" date="2007" name="J. Bacteriol.">
        <title>The complete genome sequence of the lactic acid bacterial paradigm Lactococcus lactis subsp. cremoris MG1363.</title>
        <authorList>
            <person name="Wegmann U."/>
            <person name="O'Connell-Motherway M."/>
            <person name="Zomer A."/>
            <person name="Buist G."/>
            <person name="Shearman C."/>
            <person name="Canchaya C."/>
            <person name="Ventura M."/>
            <person name="Goesmann A."/>
            <person name="Gasson M.J."/>
            <person name="Kuipers O.P."/>
            <person name="van Sinderen D."/>
            <person name="Kok J."/>
        </authorList>
    </citation>
    <scope>NUCLEOTIDE SEQUENCE [LARGE SCALE GENOMIC DNA]</scope>
    <source>
        <strain>MG1363</strain>
    </source>
</reference>
<name>RL27_LACLM</name>
<protein>
    <recommendedName>
        <fullName evidence="2">Large ribosomal subunit protein bL27</fullName>
    </recommendedName>
    <alternativeName>
        <fullName evidence="4">50S ribosomal protein L27</fullName>
    </alternativeName>
</protein>
<feature type="propeptide" id="PRO_0000459905" evidence="1">
    <location>
        <begin position="1"/>
        <end position="9"/>
    </location>
</feature>
<feature type="chain" id="PRO_1000017503" description="Large ribosomal subunit protein bL27">
    <location>
        <begin position="10"/>
        <end position="94"/>
    </location>
</feature>
<feature type="region of interest" description="Disordered" evidence="3">
    <location>
        <begin position="12"/>
        <end position="33"/>
    </location>
</feature>
<keyword id="KW-0002">3D-structure</keyword>
<keyword id="KW-0687">Ribonucleoprotein</keyword>
<keyword id="KW-0689">Ribosomal protein</keyword>
<accession>A2RLA2</accession>
<organism>
    <name type="scientific">Lactococcus lactis subsp. cremoris (strain MG1363)</name>
    <dbReference type="NCBI Taxonomy" id="416870"/>
    <lineage>
        <taxon>Bacteria</taxon>
        <taxon>Bacillati</taxon>
        <taxon>Bacillota</taxon>
        <taxon>Bacilli</taxon>
        <taxon>Lactobacillales</taxon>
        <taxon>Streptococcaceae</taxon>
        <taxon>Lactococcus</taxon>
        <taxon>Lactococcus cremoris subsp. cremoris</taxon>
    </lineage>
</organism>
<evidence type="ECO:0000250" key="1">
    <source>
        <dbReference type="UniProtKB" id="Q2FXT0"/>
    </source>
</evidence>
<evidence type="ECO:0000255" key="2">
    <source>
        <dbReference type="HAMAP-Rule" id="MF_00539"/>
    </source>
</evidence>
<evidence type="ECO:0000256" key="3">
    <source>
        <dbReference type="SAM" id="MobiDB-lite"/>
    </source>
</evidence>
<evidence type="ECO:0000305" key="4"/>
<dbReference type="EMBL" id="AM406671">
    <property type="protein sequence ID" value="CAL98069.1"/>
    <property type="molecule type" value="Genomic_DNA"/>
</dbReference>
<dbReference type="RefSeq" id="WP_003130646.1">
    <property type="nucleotide sequence ID" value="NZ_WJVF01000002.1"/>
</dbReference>
<dbReference type="PDB" id="5MYJ">
    <property type="method" value="EM"/>
    <property type="resolution" value="5.60 A"/>
    <property type="chains" value="BZ=1-94"/>
</dbReference>
<dbReference type="PDBsum" id="5MYJ"/>
<dbReference type="EMDB" id="EMD-3581"/>
<dbReference type="SMR" id="A2RLA2"/>
<dbReference type="STRING" id="416870.llmg_1491"/>
<dbReference type="GeneID" id="89633205"/>
<dbReference type="KEGG" id="llm:llmg_1491"/>
<dbReference type="eggNOG" id="COG0211">
    <property type="taxonomic scope" value="Bacteria"/>
</dbReference>
<dbReference type="HOGENOM" id="CLU_095424_4_0_9"/>
<dbReference type="OrthoDB" id="9803474at2"/>
<dbReference type="PhylomeDB" id="A2RLA2"/>
<dbReference type="Proteomes" id="UP000000364">
    <property type="component" value="Chromosome"/>
</dbReference>
<dbReference type="GO" id="GO:0022625">
    <property type="term" value="C:cytosolic large ribosomal subunit"/>
    <property type="evidence" value="ECO:0007669"/>
    <property type="project" value="TreeGrafter"/>
</dbReference>
<dbReference type="GO" id="GO:0003735">
    <property type="term" value="F:structural constituent of ribosome"/>
    <property type="evidence" value="ECO:0007669"/>
    <property type="project" value="InterPro"/>
</dbReference>
<dbReference type="GO" id="GO:0006412">
    <property type="term" value="P:translation"/>
    <property type="evidence" value="ECO:0007669"/>
    <property type="project" value="UniProtKB-UniRule"/>
</dbReference>
<dbReference type="FunFam" id="2.40.50.100:FF:000004">
    <property type="entry name" value="50S ribosomal protein L27"/>
    <property type="match status" value="1"/>
</dbReference>
<dbReference type="Gene3D" id="2.40.50.100">
    <property type="match status" value="1"/>
</dbReference>
<dbReference type="HAMAP" id="MF_00539">
    <property type="entry name" value="Ribosomal_bL27"/>
    <property type="match status" value="1"/>
</dbReference>
<dbReference type="InterPro" id="IPR001684">
    <property type="entry name" value="Ribosomal_bL27"/>
</dbReference>
<dbReference type="InterPro" id="IPR018261">
    <property type="entry name" value="Ribosomal_bL27_CS"/>
</dbReference>
<dbReference type="NCBIfam" id="TIGR00062">
    <property type="entry name" value="L27"/>
    <property type="match status" value="1"/>
</dbReference>
<dbReference type="PANTHER" id="PTHR15893:SF0">
    <property type="entry name" value="LARGE RIBOSOMAL SUBUNIT PROTEIN BL27M"/>
    <property type="match status" value="1"/>
</dbReference>
<dbReference type="PANTHER" id="PTHR15893">
    <property type="entry name" value="RIBOSOMAL PROTEIN L27"/>
    <property type="match status" value="1"/>
</dbReference>
<dbReference type="Pfam" id="PF01016">
    <property type="entry name" value="Ribosomal_L27"/>
    <property type="match status" value="1"/>
</dbReference>
<dbReference type="PRINTS" id="PR00063">
    <property type="entry name" value="RIBOSOMALL27"/>
</dbReference>
<dbReference type="SUPFAM" id="SSF110324">
    <property type="entry name" value="Ribosomal L27 protein-like"/>
    <property type="match status" value="1"/>
</dbReference>
<dbReference type="PROSITE" id="PS00831">
    <property type="entry name" value="RIBOSOMAL_L27"/>
    <property type="match status" value="1"/>
</dbReference>
<comment type="PTM">
    <text evidence="1">The N-terminus is cleaved by ribosomal processing cysteine protease Prp.</text>
</comment>
<comment type="similarity">
    <text evidence="2">Belongs to the bacterial ribosomal protein bL27 family.</text>
</comment>
<gene>
    <name evidence="2" type="primary">rpmA</name>
    <name type="ordered locus">llmg_1491</name>
</gene>
<proteinExistence type="evidence at protein level"/>